<reference key="1">
    <citation type="journal article" date="2009" name="BMC Genomics">
        <title>Conservation in the face of diversity: multistrain analysis of an intracellular bacterium.</title>
        <authorList>
            <person name="Dark M.J."/>
            <person name="Herndon D.R."/>
            <person name="Kappmeyer L.S."/>
            <person name="Gonzales M.P."/>
            <person name="Nordeen E."/>
            <person name="Palmer G.H."/>
            <person name="Knowles D.P. Jr."/>
            <person name="Brayton K.A."/>
        </authorList>
    </citation>
    <scope>NUCLEOTIDE SEQUENCE [LARGE SCALE GENOMIC DNA]</scope>
    <source>
        <strain>Florida</strain>
    </source>
</reference>
<accession>B9KHZ8</accession>
<gene>
    <name evidence="1" type="primary">trhO</name>
    <name type="ordered locus">AMF_234</name>
</gene>
<name>TRHO_ANAMF</name>
<evidence type="ECO:0000255" key="1">
    <source>
        <dbReference type="HAMAP-Rule" id="MF_00469"/>
    </source>
</evidence>
<proteinExistence type="inferred from homology"/>
<protein>
    <recommendedName>
        <fullName evidence="1">tRNA uridine(34) hydroxylase</fullName>
        <ecNumber evidence="1">1.14.-.-</ecNumber>
    </recommendedName>
    <alternativeName>
        <fullName evidence="1">tRNA hydroxylation protein O</fullName>
    </alternativeName>
</protein>
<feature type="chain" id="PRO_1000135457" description="tRNA uridine(34) hydroxylase">
    <location>
        <begin position="1"/>
        <end position="277"/>
    </location>
</feature>
<feature type="domain" description="Rhodanese" evidence="1">
    <location>
        <begin position="126"/>
        <end position="221"/>
    </location>
</feature>
<feature type="active site" description="Cysteine persulfide intermediate" evidence="1">
    <location>
        <position position="181"/>
    </location>
</feature>
<comment type="function">
    <text evidence="1">Catalyzes oxygen-dependent 5-hydroxyuridine (ho5U) modification at position 34 in tRNAs.</text>
</comment>
<comment type="catalytic activity">
    <reaction evidence="1">
        <text>uridine(34) in tRNA + AH2 + O2 = 5-hydroxyuridine(34) in tRNA + A + H2O</text>
        <dbReference type="Rhea" id="RHEA:64224"/>
        <dbReference type="Rhea" id="RHEA-COMP:11727"/>
        <dbReference type="Rhea" id="RHEA-COMP:13381"/>
        <dbReference type="ChEBI" id="CHEBI:13193"/>
        <dbReference type="ChEBI" id="CHEBI:15377"/>
        <dbReference type="ChEBI" id="CHEBI:15379"/>
        <dbReference type="ChEBI" id="CHEBI:17499"/>
        <dbReference type="ChEBI" id="CHEBI:65315"/>
        <dbReference type="ChEBI" id="CHEBI:136877"/>
    </reaction>
</comment>
<comment type="similarity">
    <text evidence="1">Belongs to the TrhO family.</text>
</comment>
<dbReference type="EC" id="1.14.-.-" evidence="1"/>
<dbReference type="EMBL" id="CP001079">
    <property type="protein sequence ID" value="ACM49110.1"/>
    <property type="molecule type" value="Genomic_DNA"/>
</dbReference>
<dbReference type="SMR" id="B9KHZ8"/>
<dbReference type="STRING" id="320483.AMF_234"/>
<dbReference type="KEGG" id="amf:AMF_234"/>
<dbReference type="eggNOG" id="COG1054">
    <property type="taxonomic scope" value="Bacteria"/>
</dbReference>
<dbReference type="HOGENOM" id="CLU_038878_0_1_5"/>
<dbReference type="Proteomes" id="UP000007307">
    <property type="component" value="Chromosome"/>
</dbReference>
<dbReference type="GO" id="GO:0016705">
    <property type="term" value="F:oxidoreductase activity, acting on paired donors, with incorporation or reduction of molecular oxygen"/>
    <property type="evidence" value="ECO:0007669"/>
    <property type="project" value="UniProtKB-UniRule"/>
</dbReference>
<dbReference type="GO" id="GO:0006400">
    <property type="term" value="P:tRNA modification"/>
    <property type="evidence" value="ECO:0007669"/>
    <property type="project" value="UniProtKB-UniRule"/>
</dbReference>
<dbReference type="CDD" id="cd01518">
    <property type="entry name" value="RHOD_YceA"/>
    <property type="match status" value="1"/>
</dbReference>
<dbReference type="Gene3D" id="3.30.70.100">
    <property type="match status" value="1"/>
</dbReference>
<dbReference type="Gene3D" id="3.40.250.10">
    <property type="entry name" value="Rhodanese-like domain"/>
    <property type="match status" value="1"/>
</dbReference>
<dbReference type="HAMAP" id="MF_00469">
    <property type="entry name" value="TrhO"/>
    <property type="match status" value="1"/>
</dbReference>
<dbReference type="InterPro" id="IPR001763">
    <property type="entry name" value="Rhodanese-like_dom"/>
</dbReference>
<dbReference type="InterPro" id="IPR036873">
    <property type="entry name" value="Rhodanese-like_dom_sf"/>
</dbReference>
<dbReference type="InterPro" id="IPR020936">
    <property type="entry name" value="TrhO"/>
</dbReference>
<dbReference type="InterPro" id="IPR040503">
    <property type="entry name" value="TRHO_N"/>
</dbReference>
<dbReference type="NCBIfam" id="NF001136">
    <property type="entry name" value="PRK00142.1-4"/>
    <property type="match status" value="1"/>
</dbReference>
<dbReference type="PANTHER" id="PTHR43268:SF3">
    <property type="entry name" value="RHODANESE-LIKE DOMAIN-CONTAINING PROTEIN 7-RELATED"/>
    <property type="match status" value="1"/>
</dbReference>
<dbReference type="PANTHER" id="PTHR43268">
    <property type="entry name" value="THIOSULFATE SULFURTRANSFERASE/RHODANESE-LIKE DOMAIN-CONTAINING PROTEIN 2"/>
    <property type="match status" value="1"/>
</dbReference>
<dbReference type="Pfam" id="PF00581">
    <property type="entry name" value="Rhodanese"/>
    <property type="match status" value="1"/>
</dbReference>
<dbReference type="Pfam" id="PF17773">
    <property type="entry name" value="UPF0176_N"/>
    <property type="match status" value="1"/>
</dbReference>
<dbReference type="SMART" id="SM00450">
    <property type="entry name" value="RHOD"/>
    <property type="match status" value="1"/>
</dbReference>
<dbReference type="SUPFAM" id="SSF52821">
    <property type="entry name" value="Rhodanese/Cell cycle control phosphatase"/>
    <property type="match status" value="1"/>
</dbReference>
<dbReference type="PROSITE" id="PS50206">
    <property type="entry name" value="RHODANESE_3"/>
    <property type="match status" value="1"/>
</dbReference>
<keyword id="KW-0560">Oxidoreductase</keyword>
<keyword id="KW-1185">Reference proteome</keyword>
<keyword id="KW-0819">tRNA processing</keyword>
<sequence>MLSVAMGYVIAAFYRFVHLHNYYDMKPVILEFCLSRGIKGTVILAEQGINATIAGSRQSIGEFFSFLDSDDRLRGMKYHESHSDREPFAKMKVRLKREVVRLGIDGFDCSLRGEYIDPRDWDEFVSSPDVHVIDTRNDYEVRLGRFKGAIDPGTSSFREFPEWARNWALDKERDTCVAMYCTGGIRCEKSTAFMRSLGFRNVYHLRGGILNYLETVRGDDSLWEGECFVFDDRIAVDRNVSPSEDIKCIKCAGEVDASDLRSVSKGNIMCWDCRLQA</sequence>
<organism>
    <name type="scientific">Anaplasma marginale (strain Florida)</name>
    <dbReference type="NCBI Taxonomy" id="320483"/>
    <lineage>
        <taxon>Bacteria</taxon>
        <taxon>Pseudomonadati</taxon>
        <taxon>Pseudomonadota</taxon>
        <taxon>Alphaproteobacteria</taxon>
        <taxon>Rickettsiales</taxon>
        <taxon>Anaplasmataceae</taxon>
        <taxon>Anaplasma</taxon>
    </lineage>
</organism>